<accession>Q8M6Z3</accession>
<reference key="1">
    <citation type="journal article" date="2002" name="Mol. Biol. Evol.">
        <title>Mitochondrial DNA sequence evolution and phylogeny of the Atlantic Alcidae, including the extinct great auk (Pinguinus impennis).</title>
        <authorList>
            <person name="Moum T."/>
            <person name="Arnason U."/>
            <person name="Arnason E."/>
        </authorList>
    </citation>
    <scope>NUCLEOTIDE SEQUENCE [GENOMIC DNA]</scope>
    <source>
        <tissue>Muscle</tissue>
    </source>
</reference>
<dbReference type="EMBL" id="AJ242684">
    <property type="protein sequence ID" value="CAC80346.1"/>
    <property type="molecule type" value="Genomic_DNA"/>
</dbReference>
<dbReference type="SMR" id="Q8M6Z3"/>
<dbReference type="GO" id="GO:0005743">
    <property type="term" value="C:mitochondrial inner membrane"/>
    <property type="evidence" value="ECO:0007669"/>
    <property type="project" value="UniProtKB-SubCell"/>
</dbReference>
<dbReference type="GO" id="GO:0045275">
    <property type="term" value="C:respiratory chain complex III"/>
    <property type="evidence" value="ECO:0007669"/>
    <property type="project" value="InterPro"/>
</dbReference>
<dbReference type="GO" id="GO:0046872">
    <property type="term" value="F:metal ion binding"/>
    <property type="evidence" value="ECO:0007669"/>
    <property type="project" value="UniProtKB-KW"/>
</dbReference>
<dbReference type="GO" id="GO:0008121">
    <property type="term" value="F:ubiquinol-cytochrome-c reductase activity"/>
    <property type="evidence" value="ECO:0007669"/>
    <property type="project" value="InterPro"/>
</dbReference>
<dbReference type="GO" id="GO:0006122">
    <property type="term" value="P:mitochondrial electron transport, ubiquinol to cytochrome c"/>
    <property type="evidence" value="ECO:0007669"/>
    <property type="project" value="TreeGrafter"/>
</dbReference>
<dbReference type="CDD" id="cd00290">
    <property type="entry name" value="cytochrome_b_C"/>
    <property type="match status" value="1"/>
</dbReference>
<dbReference type="CDD" id="cd00284">
    <property type="entry name" value="Cytochrome_b_N"/>
    <property type="match status" value="1"/>
</dbReference>
<dbReference type="FunFam" id="1.20.810.10:FF:000002">
    <property type="entry name" value="Cytochrome b"/>
    <property type="match status" value="1"/>
</dbReference>
<dbReference type="Gene3D" id="1.20.810.10">
    <property type="entry name" value="Cytochrome Bc1 Complex, Chain C"/>
    <property type="match status" value="1"/>
</dbReference>
<dbReference type="InterPro" id="IPR005798">
    <property type="entry name" value="Cyt_b/b6_C"/>
</dbReference>
<dbReference type="InterPro" id="IPR036150">
    <property type="entry name" value="Cyt_b/b6_C_sf"/>
</dbReference>
<dbReference type="InterPro" id="IPR005797">
    <property type="entry name" value="Cyt_b/b6_N"/>
</dbReference>
<dbReference type="InterPro" id="IPR027387">
    <property type="entry name" value="Cytb/b6-like_sf"/>
</dbReference>
<dbReference type="InterPro" id="IPR030689">
    <property type="entry name" value="Cytochrome_b"/>
</dbReference>
<dbReference type="InterPro" id="IPR048260">
    <property type="entry name" value="Cytochrome_b_C_euk/bac"/>
</dbReference>
<dbReference type="InterPro" id="IPR048259">
    <property type="entry name" value="Cytochrome_b_N_euk/bac"/>
</dbReference>
<dbReference type="InterPro" id="IPR016174">
    <property type="entry name" value="Di-haem_cyt_TM"/>
</dbReference>
<dbReference type="PANTHER" id="PTHR19271">
    <property type="entry name" value="CYTOCHROME B"/>
    <property type="match status" value="1"/>
</dbReference>
<dbReference type="PANTHER" id="PTHR19271:SF16">
    <property type="entry name" value="CYTOCHROME B"/>
    <property type="match status" value="1"/>
</dbReference>
<dbReference type="Pfam" id="PF00032">
    <property type="entry name" value="Cytochrom_B_C"/>
    <property type="match status" value="1"/>
</dbReference>
<dbReference type="Pfam" id="PF00033">
    <property type="entry name" value="Cytochrome_B"/>
    <property type="match status" value="1"/>
</dbReference>
<dbReference type="PIRSF" id="PIRSF038885">
    <property type="entry name" value="COB"/>
    <property type="match status" value="1"/>
</dbReference>
<dbReference type="SUPFAM" id="SSF81648">
    <property type="entry name" value="a domain/subunit of cytochrome bc1 complex (Ubiquinol-cytochrome c reductase)"/>
    <property type="match status" value="1"/>
</dbReference>
<dbReference type="SUPFAM" id="SSF81342">
    <property type="entry name" value="Transmembrane di-heme cytochromes"/>
    <property type="match status" value="1"/>
</dbReference>
<dbReference type="PROSITE" id="PS51003">
    <property type="entry name" value="CYTB_CTER"/>
    <property type="match status" value="1"/>
</dbReference>
<dbReference type="PROSITE" id="PS51002">
    <property type="entry name" value="CYTB_NTER"/>
    <property type="match status" value="1"/>
</dbReference>
<comment type="function">
    <text evidence="2">Component of the ubiquinol-cytochrome c reductase complex (complex III or cytochrome b-c1 complex) that is part of the mitochondrial respiratory chain. The b-c1 complex mediates electron transfer from ubiquinol to cytochrome c. Contributes to the generation of a proton gradient across the mitochondrial membrane that is then used for ATP synthesis.</text>
</comment>
<comment type="cofactor">
    <cofactor evidence="2">
        <name>heme b</name>
        <dbReference type="ChEBI" id="CHEBI:60344"/>
    </cofactor>
    <text evidence="2">Binds 2 heme b groups non-covalently.</text>
</comment>
<comment type="subunit">
    <text evidence="2">The cytochrome bc1 complex contains 11 subunits: 3 respiratory subunits (MT-CYB, CYC1 and UQCRFS1), 2 core proteins (UQCRC1 and UQCRC2) and 6 low-molecular weight proteins (UQCRH/QCR6, UQCRB/QCR7, UQCRQ/QCR8, UQCR10/QCR9, UQCR11/QCR10 and a cleavage product of UQCRFS1). This cytochrome bc1 complex then forms a dimer.</text>
</comment>
<comment type="subcellular location">
    <subcellularLocation>
        <location evidence="2">Mitochondrion inner membrane</location>
        <topology evidence="2">Multi-pass membrane protein</topology>
    </subcellularLocation>
</comment>
<comment type="miscellaneous">
    <text evidence="1">Heme 1 (or BL or b562) is low-potential and absorbs at about 562 nm, and heme 2 (or BH or b566) is high-potential and absorbs at about 566 nm.</text>
</comment>
<comment type="similarity">
    <text evidence="3 4">Belongs to the cytochrome b family.</text>
</comment>
<comment type="caution">
    <text evidence="2">The full-length protein contains only eight transmembrane helices, not nine as predicted by bioinformatics tools.</text>
</comment>
<name>CYB_ALLAL</name>
<evidence type="ECO:0000250" key="1"/>
<evidence type="ECO:0000250" key="2">
    <source>
        <dbReference type="UniProtKB" id="P00157"/>
    </source>
</evidence>
<evidence type="ECO:0000255" key="3">
    <source>
        <dbReference type="PROSITE-ProRule" id="PRU00967"/>
    </source>
</evidence>
<evidence type="ECO:0000255" key="4">
    <source>
        <dbReference type="PROSITE-ProRule" id="PRU00968"/>
    </source>
</evidence>
<proteinExistence type="inferred from homology"/>
<geneLocation type="mitochondrion"/>
<feature type="chain" id="PRO_0000060566" description="Cytochrome b">
    <location>
        <begin position="1"/>
        <end position="380"/>
    </location>
</feature>
<feature type="transmembrane region" description="Helical" evidence="2">
    <location>
        <begin position="34"/>
        <end position="54"/>
    </location>
</feature>
<feature type="transmembrane region" description="Helical" evidence="2">
    <location>
        <begin position="78"/>
        <end position="99"/>
    </location>
</feature>
<feature type="transmembrane region" description="Helical" evidence="2">
    <location>
        <begin position="114"/>
        <end position="134"/>
    </location>
</feature>
<feature type="transmembrane region" description="Helical" evidence="2">
    <location>
        <begin position="179"/>
        <end position="199"/>
    </location>
</feature>
<feature type="transmembrane region" description="Helical" evidence="2">
    <location>
        <begin position="227"/>
        <end position="247"/>
    </location>
</feature>
<feature type="transmembrane region" description="Helical" evidence="2">
    <location>
        <begin position="289"/>
        <end position="309"/>
    </location>
</feature>
<feature type="transmembrane region" description="Helical" evidence="2">
    <location>
        <begin position="321"/>
        <end position="341"/>
    </location>
</feature>
<feature type="transmembrane region" description="Helical" evidence="2">
    <location>
        <begin position="348"/>
        <end position="368"/>
    </location>
</feature>
<feature type="binding site" description="axial binding residue" evidence="2">
    <location>
        <position position="84"/>
    </location>
    <ligand>
        <name>heme b</name>
        <dbReference type="ChEBI" id="CHEBI:60344"/>
        <label>b562</label>
    </ligand>
    <ligandPart>
        <name>Fe</name>
        <dbReference type="ChEBI" id="CHEBI:18248"/>
    </ligandPart>
</feature>
<feature type="binding site" description="axial binding residue" evidence="2">
    <location>
        <position position="98"/>
    </location>
    <ligand>
        <name>heme b</name>
        <dbReference type="ChEBI" id="CHEBI:60344"/>
        <label>b566</label>
    </ligand>
    <ligandPart>
        <name>Fe</name>
        <dbReference type="ChEBI" id="CHEBI:18248"/>
    </ligandPart>
</feature>
<feature type="binding site" description="axial binding residue" evidence="2">
    <location>
        <position position="183"/>
    </location>
    <ligand>
        <name>heme b</name>
        <dbReference type="ChEBI" id="CHEBI:60344"/>
        <label>b562</label>
    </ligand>
    <ligandPart>
        <name>Fe</name>
        <dbReference type="ChEBI" id="CHEBI:18248"/>
    </ligandPart>
</feature>
<feature type="binding site" description="axial binding residue" evidence="2">
    <location>
        <position position="197"/>
    </location>
    <ligand>
        <name>heme b</name>
        <dbReference type="ChEBI" id="CHEBI:60344"/>
        <label>b566</label>
    </ligand>
    <ligandPart>
        <name>Fe</name>
        <dbReference type="ChEBI" id="CHEBI:18248"/>
    </ligandPart>
</feature>
<feature type="binding site" evidence="2">
    <location>
        <position position="202"/>
    </location>
    <ligand>
        <name>a ubiquinone</name>
        <dbReference type="ChEBI" id="CHEBI:16389"/>
    </ligand>
</feature>
<protein>
    <recommendedName>
        <fullName>Cytochrome b</fullName>
    </recommendedName>
    <alternativeName>
        <fullName>Complex III subunit 3</fullName>
    </alternativeName>
    <alternativeName>
        <fullName>Complex III subunit III</fullName>
    </alternativeName>
    <alternativeName>
        <fullName>Cytochrome b-c1 complex subunit 3</fullName>
    </alternativeName>
    <alternativeName>
        <fullName>Ubiquinol-cytochrome-c reductase complex cytochrome b subunit</fullName>
    </alternativeName>
</protein>
<keyword id="KW-0249">Electron transport</keyword>
<keyword id="KW-0349">Heme</keyword>
<keyword id="KW-0408">Iron</keyword>
<keyword id="KW-0472">Membrane</keyword>
<keyword id="KW-0479">Metal-binding</keyword>
<keyword id="KW-0496">Mitochondrion</keyword>
<keyword id="KW-0999">Mitochondrion inner membrane</keyword>
<keyword id="KW-0679">Respiratory chain</keyword>
<keyword id="KW-0812">Transmembrane</keyword>
<keyword id="KW-1133">Transmembrane helix</keyword>
<keyword id="KW-0813">Transport</keyword>
<keyword id="KW-0830">Ubiquinone</keyword>
<gene>
    <name type="primary">MT-CYB</name>
    <name type="synonym">COB</name>
    <name type="synonym">CYTB</name>
    <name type="synonym">MTCYB</name>
</gene>
<sequence>MAPNLRKSHPLLKLINNSLIDLPTPSNISAWWNFGSLLGICLLTQILTGLLLATHYTADTTLAFSSVAHTCRNVQYGWLIRNLHANGASFFFICIYLHIGRGFYYGSYLNKETWNTGIILLLALMATAFVGYVLPWGQMSFWGATVITNLFSAIPYIGQTLVEWAWGGFSVDNPTLTRFFALHFLLPFMIAGLAFIHLTFLHESGSNNPLGIPSNCDKIPFHPYFSLKDILGFIVMFLPLTTLALFSPNLLGDPENFTPANPLVTPPHIKPEWYFLFAYAILRSIPNKLGGVLALAASVLVLFLTPLLHKSKQRAMTFRPFSQFLFWTLVANLFILTWVGSQPVEHPFIIIGQLASLTYFTILLLLFPIIGALENKMLNY</sequence>
<organism>
    <name type="scientific">Alle alle</name>
    <name type="common">Dovekie</name>
    <name type="synonym">Alca alle</name>
    <dbReference type="NCBI Taxonomy" id="28691"/>
    <lineage>
        <taxon>Eukaryota</taxon>
        <taxon>Metazoa</taxon>
        <taxon>Chordata</taxon>
        <taxon>Craniata</taxon>
        <taxon>Vertebrata</taxon>
        <taxon>Euteleostomi</taxon>
        <taxon>Archelosauria</taxon>
        <taxon>Archosauria</taxon>
        <taxon>Dinosauria</taxon>
        <taxon>Saurischia</taxon>
        <taxon>Theropoda</taxon>
        <taxon>Coelurosauria</taxon>
        <taxon>Aves</taxon>
        <taxon>Neognathae</taxon>
        <taxon>Neoaves</taxon>
        <taxon>Charadriiformes</taxon>
        <taxon>Alcidae</taxon>
        <taxon>Alle</taxon>
    </lineage>
</organism>